<proteinExistence type="inferred from homology"/>
<feature type="chain" id="PRO_1000005653" description="Beta-hexosaminidase">
    <location>
        <begin position="1"/>
        <end position="341"/>
    </location>
</feature>
<feature type="active site" description="Proton donor/acceptor" evidence="1">
    <location>
        <position position="176"/>
    </location>
</feature>
<feature type="active site" description="Nucleophile" evidence="1">
    <location>
        <position position="248"/>
    </location>
</feature>
<feature type="binding site" evidence="1">
    <location>
        <position position="62"/>
    </location>
    <ligand>
        <name>substrate</name>
    </ligand>
</feature>
<feature type="binding site" evidence="1">
    <location>
        <position position="70"/>
    </location>
    <ligand>
        <name>substrate</name>
    </ligand>
</feature>
<feature type="binding site" evidence="1">
    <location>
        <position position="133"/>
    </location>
    <ligand>
        <name>substrate</name>
    </ligand>
</feature>
<feature type="binding site" evidence="1">
    <location>
        <begin position="163"/>
        <end position="164"/>
    </location>
    <ligand>
        <name>substrate</name>
    </ligand>
</feature>
<feature type="site" description="Important for catalytic activity" evidence="1">
    <location>
        <position position="174"/>
    </location>
</feature>
<comment type="function">
    <text evidence="1">Plays a role in peptidoglycan recycling by cleaving the terminal beta-1,4-linked N-acetylglucosamine (GlcNAc) from peptide-linked peptidoglycan fragments, giving rise to free GlcNAc, anhydro-N-acetylmuramic acid and anhydro-N-acetylmuramic acid-linked peptides.</text>
</comment>
<comment type="catalytic activity">
    <reaction evidence="1">
        <text>Hydrolysis of terminal non-reducing N-acetyl-D-hexosamine residues in N-acetyl-beta-D-hexosaminides.</text>
        <dbReference type="EC" id="3.2.1.52"/>
    </reaction>
</comment>
<comment type="pathway">
    <text evidence="1">Cell wall biogenesis; peptidoglycan recycling.</text>
</comment>
<comment type="subcellular location">
    <subcellularLocation>
        <location evidence="1">Cytoplasm</location>
    </subcellularLocation>
</comment>
<comment type="similarity">
    <text evidence="1">Belongs to the glycosyl hydrolase 3 family. NagZ subfamily.</text>
</comment>
<sequence>MGPVMLDVEGFELDAEEREILAHPLVGGLILFTRNYHDPEQLRELVRQIRSSARNHLVIAVDQEGGRVQRFREGFTRLPAAQSFAALLGMDAGGKLAEEAGWLMACEMIAMDIDISFAPVLDVGHLSAAIGERSFHEEPENVLAMAKRFITGMQSAGMKATGKHFPGHGAVSADSHKETPRDPRPAAEIRRHDMLPFRELISYNMLDAVMPAHVVYSDVDPLPASGSPYWLKQVLRKELGFDGVIFSDDLSMEGAAILGSYAERGQAALDAGCDMILVCNNRKGAVSVLDNLSPIKAERVTRLYHKGVITRQELMASARWKQVSGELTALHERWQTHKAGQ</sequence>
<accession>A7MFT1</accession>
<gene>
    <name evidence="1" type="primary">nagZ</name>
    <name type="ordered locus">ESA_02237</name>
</gene>
<keyword id="KW-0131">Cell cycle</keyword>
<keyword id="KW-0132">Cell division</keyword>
<keyword id="KW-0133">Cell shape</keyword>
<keyword id="KW-0961">Cell wall biogenesis/degradation</keyword>
<keyword id="KW-0963">Cytoplasm</keyword>
<keyword id="KW-0326">Glycosidase</keyword>
<keyword id="KW-0378">Hydrolase</keyword>
<keyword id="KW-0573">Peptidoglycan synthesis</keyword>
<keyword id="KW-1185">Reference proteome</keyword>
<protein>
    <recommendedName>
        <fullName evidence="1">Beta-hexosaminidase</fullName>
        <ecNumber evidence="1">3.2.1.52</ecNumber>
    </recommendedName>
    <alternativeName>
        <fullName evidence="1">Beta-N-acetylhexosaminidase</fullName>
    </alternativeName>
    <alternativeName>
        <fullName evidence="1">N-acetyl-beta-glucosaminidase</fullName>
    </alternativeName>
</protein>
<reference key="1">
    <citation type="journal article" date="2010" name="PLoS ONE">
        <title>Genome sequence of Cronobacter sakazakii BAA-894 and comparative genomic hybridization analysis with other Cronobacter species.</title>
        <authorList>
            <person name="Kucerova E."/>
            <person name="Clifton S.W."/>
            <person name="Xia X.Q."/>
            <person name="Long F."/>
            <person name="Porwollik S."/>
            <person name="Fulton L."/>
            <person name="Fronick C."/>
            <person name="Minx P."/>
            <person name="Kyung K."/>
            <person name="Warren W."/>
            <person name="Fulton R."/>
            <person name="Feng D."/>
            <person name="Wollam A."/>
            <person name="Shah N."/>
            <person name="Bhonagiri V."/>
            <person name="Nash W.E."/>
            <person name="Hallsworth-Pepin K."/>
            <person name="Wilson R.K."/>
            <person name="McClelland M."/>
            <person name="Forsythe S.J."/>
        </authorList>
    </citation>
    <scope>NUCLEOTIDE SEQUENCE [LARGE SCALE GENOMIC DNA]</scope>
    <source>
        <strain>ATCC BAA-894</strain>
    </source>
</reference>
<evidence type="ECO:0000255" key="1">
    <source>
        <dbReference type="HAMAP-Rule" id="MF_00364"/>
    </source>
</evidence>
<organism>
    <name type="scientific">Cronobacter sakazakii (strain ATCC BAA-894)</name>
    <name type="common">Enterobacter sakazakii</name>
    <dbReference type="NCBI Taxonomy" id="290339"/>
    <lineage>
        <taxon>Bacteria</taxon>
        <taxon>Pseudomonadati</taxon>
        <taxon>Pseudomonadota</taxon>
        <taxon>Gammaproteobacteria</taxon>
        <taxon>Enterobacterales</taxon>
        <taxon>Enterobacteriaceae</taxon>
        <taxon>Cronobacter</taxon>
    </lineage>
</organism>
<dbReference type="EC" id="3.2.1.52" evidence="1"/>
<dbReference type="EMBL" id="CP000783">
    <property type="protein sequence ID" value="ABU77486.1"/>
    <property type="molecule type" value="Genomic_DNA"/>
</dbReference>
<dbReference type="RefSeq" id="WP_012125071.1">
    <property type="nucleotide sequence ID" value="NC_009778.1"/>
</dbReference>
<dbReference type="SMR" id="A7MFT1"/>
<dbReference type="CAZy" id="GH3">
    <property type="family name" value="Glycoside Hydrolase Family 3"/>
</dbReference>
<dbReference type="KEGG" id="esa:ESA_02237"/>
<dbReference type="PATRIC" id="fig|290339.8.peg.1998"/>
<dbReference type="HOGENOM" id="CLU_008392_0_0_6"/>
<dbReference type="UniPathway" id="UPA00544"/>
<dbReference type="Proteomes" id="UP000000260">
    <property type="component" value="Chromosome"/>
</dbReference>
<dbReference type="GO" id="GO:0005737">
    <property type="term" value="C:cytoplasm"/>
    <property type="evidence" value="ECO:0007669"/>
    <property type="project" value="UniProtKB-SubCell"/>
</dbReference>
<dbReference type="GO" id="GO:0004563">
    <property type="term" value="F:beta-N-acetylhexosaminidase activity"/>
    <property type="evidence" value="ECO:0007669"/>
    <property type="project" value="UniProtKB-UniRule"/>
</dbReference>
<dbReference type="GO" id="GO:0005975">
    <property type="term" value="P:carbohydrate metabolic process"/>
    <property type="evidence" value="ECO:0007669"/>
    <property type="project" value="InterPro"/>
</dbReference>
<dbReference type="GO" id="GO:0051301">
    <property type="term" value="P:cell division"/>
    <property type="evidence" value="ECO:0007669"/>
    <property type="project" value="UniProtKB-KW"/>
</dbReference>
<dbReference type="GO" id="GO:0071555">
    <property type="term" value="P:cell wall organization"/>
    <property type="evidence" value="ECO:0007669"/>
    <property type="project" value="UniProtKB-KW"/>
</dbReference>
<dbReference type="GO" id="GO:0009252">
    <property type="term" value="P:peptidoglycan biosynthetic process"/>
    <property type="evidence" value="ECO:0007669"/>
    <property type="project" value="UniProtKB-KW"/>
</dbReference>
<dbReference type="GO" id="GO:0009254">
    <property type="term" value="P:peptidoglycan turnover"/>
    <property type="evidence" value="ECO:0007669"/>
    <property type="project" value="UniProtKB-UniRule"/>
</dbReference>
<dbReference type="GO" id="GO:0008360">
    <property type="term" value="P:regulation of cell shape"/>
    <property type="evidence" value="ECO:0007669"/>
    <property type="project" value="UniProtKB-KW"/>
</dbReference>
<dbReference type="FunFam" id="3.20.20.300:FF:000001">
    <property type="entry name" value="Beta-hexosaminidase"/>
    <property type="match status" value="1"/>
</dbReference>
<dbReference type="Gene3D" id="3.20.20.300">
    <property type="entry name" value="Glycoside hydrolase, family 3, N-terminal domain"/>
    <property type="match status" value="1"/>
</dbReference>
<dbReference type="HAMAP" id="MF_00364">
    <property type="entry name" value="NagZ"/>
    <property type="match status" value="1"/>
</dbReference>
<dbReference type="InterPro" id="IPR022956">
    <property type="entry name" value="Beta_hexosaminidase_bac"/>
</dbReference>
<dbReference type="InterPro" id="IPR019800">
    <property type="entry name" value="Glyco_hydro_3_AS"/>
</dbReference>
<dbReference type="InterPro" id="IPR001764">
    <property type="entry name" value="Glyco_hydro_3_N"/>
</dbReference>
<dbReference type="InterPro" id="IPR036962">
    <property type="entry name" value="Glyco_hydro_3_N_sf"/>
</dbReference>
<dbReference type="InterPro" id="IPR017853">
    <property type="entry name" value="Glycoside_hydrolase_SF"/>
</dbReference>
<dbReference type="InterPro" id="IPR050226">
    <property type="entry name" value="NagZ_Beta-hexosaminidase"/>
</dbReference>
<dbReference type="NCBIfam" id="NF003740">
    <property type="entry name" value="PRK05337.1"/>
    <property type="match status" value="1"/>
</dbReference>
<dbReference type="PANTHER" id="PTHR30480:SF13">
    <property type="entry name" value="BETA-HEXOSAMINIDASE"/>
    <property type="match status" value="1"/>
</dbReference>
<dbReference type="PANTHER" id="PTHR30480">
    <property type="entry name" value="BETA-HEXOSAMINIDASE-RELATED"/>
    <property type="match status" value="1"/>
</dbReference>
<dbReference type="Pfam" id="PF00933">
    <property type="entry name" value="Glyco_hydro_3"/>
    <property type="match status" value="1"/>
</dbReference>
<dbReference type="SUPFAM" id="SSF51445">
    <property type="entry name" value="(Trans)glycosidases"/>
    <property type="match status" value="1"/>
</dbReference>
<dbReference type="PROSITE" id="PS00775">
    <property type="entry name" value="GLYCOSYL_HYDROL_F3"/>
    <property type="match status" value="1"/>
</dbReference>
<name>NAGZ_CROS8</name>